<accession>Q96324</accession>
<sequence>MVVKVYGQIKAANPQRVLLCFLEKDIEFEVIHVDLDKLEQKKPQHLLRQPFGQVPAIEDGYLKLFESRAIARYYATKYADQGTDLLGKTLEGRAIVDQWVEVENNYFYAVALPLVMNVVFKPKSGKPCDVALVEELKVKFDKVLDVYENRLATNRYLGGDEFTLADLSHMPGMRYIMNETSLSGLVTSRENLNRWWNEISARPAWKKLMELAAY</sequence>
<keyword id="KW-0963">Cytoplasm</keyword>
<keyword id="KW-0216">Detoxification</keyword>
<keyword id="KW-1185">Reference proteome</keyword>
<keyword id="KW-0808">Transferase</keyword>
<evidence type="ECO:0000250" key="1">
    <source>
        <dbReference type="UniProtKB" id="O80852"/>
    </source>
</evidence>
<evidence type="ECO:0000255" key="2"/>
<evidence type="ECO:0000303" key="3">
    <source>
    </source>
</evidence>
<evidence type="ECO:0000305" key="4"/>
<evidence type="ECO:0000312" key="5">
    <source>
        <dbReference type="Araport" id="AT3G03190"/>
    </source>
</evidence>
<evidence type="ECO:0000312" key="6">
    <source>
        <dbReference type="EMBL" id="AAF26107.1"/>
    </source>
</evidence>
<organism>
    <name type="scientific">Arabidopsis thaliana</name>
    <name type="common">Mouse-ear cress</name>
    <dbReference type="NCBI Taxonomy" id="3702"/>
    <lineage>
        <taxon>Eukaryota</taxon>
        <taxon>Viridiplantae</taxon>
        <taxon>Streptophyta</taxon>
        <taxon>Embryophyta</taxon>
        <taxon>Tracheophyta</taxon>
        <taxon>Spermatophyta</taxon>
        <taxon>Magnoliopsida</taxon>
        <taxon>eudicotyledons</taxon>
        <taxon>Gunneridae</taxon>
        <taxon>Pentapetalae</taxon>
        <taxon>rosids</taxon>
        <taxon>malvids</taxon>
        <taxon>Brassicales</taxon>
        <taxon>Brassicaceae</taxon>
        <taxon>Camelineae</taxon>
        <taxon>Arabidopsis</taxon>
    </lineage>
</organism>
<reference key="1">
    <citation type="journal article" date="1998" name="Plant Cell">
        <title>Functional complementation of anthocyanin sequestration in the vacuole by widely divergent glutathione S-transferases.</title>
        <authorList>
            <person name="Alfenito M.R."/>
            <person name="Souer E."/>
            <person name="Goodman C.D."/>
            <person name="Buell R."/>
            <person name="Mol J."/>
            <person name="Koes R."/>
            <person name="Walbot V."/>
        </authorList>
    </citation>
    <scope>NUCLEOTIDE SEQUENCE [MRNA]</scope>
    <source>
        <strain>cv. Columbia</strain>
    </source>
</reference>
<reference key="2">
    <citation type="journal article" date="2000" name="Nature">
        <title>Sequence and analysis of chromosome 3 of the plant Arabidopsis thaliana.</title>
        <authorList>
            <person name="Salanoubat M."/>
            <person name="Lemcke K."/>
            <person name="Rieger M."/>
            <person name="Ansorge W."/>
            <person name="Unseld M."/>
            <person name="Fartmann B."/>
            <person name="Valle G."/>
            <person name="Bloecker H."/>
            <person name="Perez-Alonso M."/>
            <person name="Obermaier B."/>
            <person name="Delseny M."/>
            <person name="Boutry M."/>
            <person name="Grivell L.A."/>
            <person name="Mache R."/>
            <person name="Puigdomenech P."/>
            <person name="De Simone V."/>
            <person name="Choisne N."/>
            <person name="Artiguenave F."/>
            <person name="Robert C."/>
            <person name="Brottier P."/>
            <person name="Wincker P."/>
            <person name="Cattolico L."/>
            <person name="Weissenbach J."/>
            <person name="Saurin W."/>
            <person name="Quetier F."/>
            <person name="Schaefer M."/>
            <person name="Mueller-Auer S."/>
            <person name="Gabel C."/>
            <person name="Fuchs M."/>
            <person name="Benes V."/>
            <person name="Wurmbach E."/>
            <person name="Drzonek H."/>
            <person name="Erfle H."/>
            <person name="Jordan N."/>
            <person name="Bangert S."/>
            <person name="Wiedelmann R."/>
            <person name="Kranz H."/>
            <person name="Voss H."/>
            <person name="Holland R."/>
            <person name="Brandt P."/>
            <person name="Nyakatura G."/>
            <person name="Vezzi A."/>
            <person name="D'Angelo M."/>
            <person name="Pallavicini A."/>
            <person name="Toppo S."/>
            <person name="Simionati B."/>
            <person name="Conrad A."/>
            <person name="Hornischer K."/>
            <person name="Kauer G."/>
            <person name="Loehnert T.-H."/>
            <person name="Nordsiek G."/>
            <person name="Reichelt J."/>
            <person name="Scharfe M."/>
            <person name="Schoen O."/>
            <person name="Bargues M."/>
            <person name="Terol J."/>
            <person name="Climent J."/>
            <person name="Navarro P."/>
            <person name="Collado C."/>
            <person name="Perez-Perez A."/>
            <person name="Ottenwaelder B."/>
            <person name="Duchemin D."/>
            <person name="Cooke R."/>
            <person name="Laudie M."/>
            <person name="Berger-Llauro C."/>
            <person name="Purnelle B."/>
            <person name="Masuy D."/>
            <person name="de Haan M."/>
            <person name="Maarse A.C."/>
            <person name="Alcaraz J.-P."/>
            <person name="Cottet A."/>
            <person name="Casacuberta E."/>
            <person name="Monfort A."/>
            <person name="Argiriou A."/>
            <person name="Flores M."/>
            <person name="Liguori R."/>
            <person name="Vitale D."/>
            <person name="Mannhaupt G."/>
            <person name="Haase D."/>
            <person name="Schoof H."/>
            <person name="Rudd S."/>
            <person name="Zaccaria P."/>
            <person name="Mewes H.-W."/>
            <person name="Mayer K.F.X."/>
            <person name="Kaul S."/>
            <person name="Town C.D."/>
            <person name="Koo H.L."/>
            <person name="Tallon L.J."/>
            <person name="Jenkins J."/>
            <person name="Rooney T."/>
            <person name="Rizzo M."/>
            <person name="Walts A."/>
            <person name="Utterback T."/>
            <person name="Fujii C.Y."/>
            <person name="Shea T.P."/>
            <person name="Creasy T.H."/>
            <person name="Haas B."/>
            <person name="Maiti R."/>
            <person name="Wu D."/>
            <person name="Peterson J."/>
            <person name="Van Aken S."/>
            <person name="Pai G."/>
            <person name="Militscher J."/>
            <person name="Sellers P."/>
            <person name="Gill J.E."/>
            <person name="Feldblyum T.V."/>
            <person name="Preuss D."/>
            <person name="Lin X."/>
            <person name="Nierman W.C."/>
            <person name="Salzberg S.L."/>
            <person name="White O."/>
            <person name="Venter J.C."/>
            <person name="Fraser C.M."/>
            <person name="Kaneko T."/>
            <person name="Nakamura Y."/>
            <person name="Sato S."/>
            <person name="Kato T."/>
            <person name="Asamizu E."/>
            <person name="Sasamoto S."/>
            <person name="Kimura T."/>
            <person name="Idesawa K."/>
            <person name="Kawashima K."/>
            <person name="Kishida Y."/>
            <person name="Kiyokawa C."/>
            <person name="Kohara M."/>
            <person name="Matsumoto M."/>
            <person name="Matsuno A."/>
            <person name="Muraki A."/>
            <person name="Nakayama S."/>
            <person name="Nakazaki N."/>
            <person name="Shinpo S."/>
            <person name="Takeuchi C."/>
            <person name="Wada T."/>
            <person name="Watanabe A."/>
            <person name="Yamada M."/>
            <person name="Yasuda M."/>
            <person name="Tabata S."/>
        </authorList>
    </citation>
    <scope>NUCLEOTIDE SEQUENCE [LARGE SCALE GENOMIC DNA]</scope>
    <source>
        <strain>cv. Columbia</strain>
    </source>
</reference>
<reference key="3">
    <citation type="journal article" date="2017" name="Plant J.">
        <title>Araport11: a complete reannotation of the Arabidopsis thaliana reference genome.</title>
        <authorList>
            <person name="Cheng C.Y."/>
            <person name="Krishnakumar V."/>
            <person name="Chan A.P."/>
            <person name="Thibaud-Nissen F."/>
            <person name="Schobel S."/>
            <person name="Town C.D."/>
        </authorList>
    </citation>
    <scope>GENOME REANNOTATION</scope>
    <source>
        <strain>cv. Columbia</strain>
    </source>
</reference>
<reference key="4">
    <citation type="journal article" date="2003" name="Science">
        <title>Empirical analysis of transcriptional activity in the Arabidopsis genome.</title>
        <authorList>
            <person name="Yamada K."/>
            <person name="Lim J."/>
            <person name="Dale J.M."/>
            <person name="Chen H."/>
            <person name="Shinn P."/>
            <person name="Palm C.J."/>
            <person name="Southwick A.M."/>
            <person name="Wu H.C."/>
            <person name="Kim C.J."/>
            <person name="Nguyen M."/>
            <person name="Pham P.K."/>
            <person name="Cheuk R.F."/>
            <person name="Karlin-Newmann G."/>
            <person name="Liu S.X."/>
            <person name="Lam B."/>
            <person name="Sakano H."/>
            <person name="Wu T."/>
            <person name="Yu G."/>
            <person name="Miranda M."/>
            <person name="Quach H.L."/>
            <person name="Tripp M."/>
            <person name="Chang C.H."/>
            <person name="Lee J.M."/>
            <person name="Toriumi M.J."/>
            <person name="Chan M.M."/>
            <person name="Tang C.C."/>
            <person name="Onodera C.S."/>
            <person name="Deng J.M."/>
            <person name="Akiyama K."/>
            <person name="Ansari Y."/>
            <person name="Arakawa T."/>
            <person name="Banh J."/>
            <person name="Banno F."/>
            <person name="Bowser L."/>
            <person name="Brooks S.Y."/>
            <person name="Carninci P."/>
            <person name="Chao Q."/>
            <person name="Choy N."/>
            <person name="Enju A."/>
            <person name="Goldsmith A.D."/>
            <person name="Gurjal M."/>
            <person name="Hansen N.F."/>
            <person name="Hayashizaki Y."/>
            <person name="Johnson-Hopson C."/>
            <person name="Hsuan V.W."/>
            <person name="Iida K."/>
            <person name="Karnes M."/>
            <person name="Khan S."/>
            <person name="Koesema E."/>
            <person name="Ishida J."/>
            <person name="Jiang P.X."/>
            <person name="Jones T."/>
            <person name="Kawai J."/>
            <person name="Kamiya A."/>
            <person name="Meyers C."/>
            <person name="Nakajima M."/>
            <person name="Narusaka M."/>
            <person name="Seki M."/>
            <person name="Sakurai T."/>
            <person name="Satou M."/>
            <person name="Tamse R."/>
            <person name="Vaysberg M."/>
            <person name="Wallender E.K."/>
            <person name="Wong C."/>
            <person name="Yamamura Y."/>
            <person name="Yuan S."/>
            <person name="Shinozaki K."/>
            <person name="Davis R.W."/>
            <person name="Theologis A."/>
            <person name="Ecker J.R."/>
        </authorList>
    </citation>
    <scope>NUCLEOTIDE SEQUENCE [LARGE SCALE MRNA]</scope>
    <source>
        <strain>cv. Columbia</strain>
    </source>
</reference>
<reference key="5">
    <citation type="journal article" date="2002" name="Plant Mol. Biol.">
        <title>Probing the diversity of the Arabidopsis glutathione S-transferase gene family.</title>
        <authorList>
            <person name="Wagner U."/>
            <person name="Edwards R."/>
            <person name="Dixon D.P."/>
            <person name="Mauch F."/>
        </authorList>
    </citation>
    <scope>GENE FAMILY</scope>
    <scope>NOMENCLATURE</scope>
</reference>
<proteinExistence type="evidence at transcript level"/>
<feature type="chain" id="PRO_0000185851" description="Glutathione S-transferase F11">
    <location>
        <begin position="1"/>
        <end position="214"/>
    </location>
</feature>
<feature type="domain" description="GST N-terminal" evidence="2">
    <location>
        <begin position="2"/>
        <end position="82"/>
    </location>
</feature>
<feature type="domain" description="GST C-terminal" evidence="2">
    <location>
        <begin position="89"/>
        <end position="214"/>
    </location>
</feature>
<feature type="binding site" evidence="1">
    <location>
        <begin position="11"/>
        <end position="12"/>
    </location>
    <ligand>
        <name>glutathione</name>
        <dbReference type="ChEBI" id="CHEBI:57925"/>
    </ligand>
</feature>
<feature type="binding site" evidence="1">
    <location>
        <begin position="40"/>
        <end position="41"/>
    </location>
    <ligand>
        <name>glutathione</name>
        <dbReference type="ChEBI" id="CHEBI:57925"/>
    </ligand>
</feature>
<feature type="binding site" evidence="1">
    <location>
        <begin position="53"/>
        <end position="54"/>
    </location>
    <ligand>
        <name>glutathione</name>
        <dbReference type="ChEBI" id="CHEBI:57925"/>
    </ligand>
</feature>
<feature type="binding site" evidence="1">
    <location>
        <begin position="66"/>
        <end position="67"/>
    </location>
    <ligand>
        <name>glutathione</name>
        <dbReference type="ChEBI" id="CHEBI:57925"/>
    </ligand>
</feature>
<dbReference type="EC" id="2.5.1.18" evidence="1"/>
<dbReference type="EMBL" id="U70672">
    <property type="protein sequence ID" value="AAB09584.1"/>
    <property type="molecule type" value="mRNA"/>
</dbReference>
<dbReference type="EMBL" id="AC012328">
    <property type="protein sequence ID" value="AAF26107.1"/>
    <property type="molecule type" value="Genomic_DNA"/>
</dbReference>
<dbReference type="EMBL" id="CP002686">
    <property type="protein sequence ID" value="AEE73911.1"/>
    <property type="molecule type" value="Genomic_DNA"/>
</dbReference>
<dbReference type="EMBL" id="AY099776">
    <property type="protein sequence ID" value="AAM20627.1"/>
    <property type="molecule type" value="mRNA"/>
</dbReference>
<dbReference type="EMBL" id="AY128877">
    <property type="protein sequence ID" value="AAM91277.1"/>
    <property type="molecule type" value="mRNA"/>
</dbReference>
<dbReference type="RefSeq" id="NP_186969.1">
    <property type="nucleotide sequence ID" value="NM_111189.3"/>
</dbReference>
<dbReference type="SMR" id="Q96324"/>
<dbReference type="FunCoup" id="Q96324">
    <property type="interactions" value="513"/>
</dbReference>
<dbReference type="STRING" id="3702.Q96324"/>
<dbReference type="PaxDb" id="3702-AT3G03190.1"/>
<dbReference type="ProteomicsDB" id="230163"/>
<dbReference type="EnsemblPlants" id="AT3G03190.1">
    <property type="protein sequence ID" value="AT3G03190.1"/>
    <property type="gene ID" value="AT3G03190"/>
</dbReference>
<dbReference type="GeneID" id="821227"/>
<dbReference type="Gramene" id="AT3G03190.1">
    <property type="protein sequence ID" value="AT3G03190.1"/>
    <property type="gene ID" value="AT3G03190"/>
</dbReference>
<dbReference type="KEGG" id="ath:AT3G03190"/>
<dbReference type="Araport" id="AT3G03190"/>
<dbReference type="TAIR" id="AT3G03190">
    <property type="gene designation" value="GSTF11"/>
</dbReference>
<dbReference type="eggNOG" id="KOG0867">
    <property type="taxonomic scope" value="Eukaryota"/>
</dbReference>
<dbReference type="HOGENOM" id="CLU_011226_5_1_1"/>
<dbReference type="InParanoid" id="Q96324"/>
<dbReference type="OMA" id="CPQRVMV"/>
<dbReference type="PhylomeDB" id="Q96324"/>
<dbReference type="BioCyc" id="ARA:AT3G03190-MONOMER"/>
<dbReference type="PRO" id="PR:Q96324"/>
<dbReference type="Proteomes" id="UP000006548">
    <property type="component" value="Chromosome 3"/>
</dbReference>
<dbReference type="ExpressionAtlas" id="Q96324">
    <property type="expression patterns" value="baseline and differential"/>
</dbReference>
<dbReference type="GO" id="GO:0005737">
    <property type="term" value="C:cytoplasm"/>
    <property type="evidence" value="ECO:0000303"/>
    <property type="project" value="TAIR"/>
</dbReference>
<dbReference type="GO" id="GO:0005829">
    <property type="term" value="C:cytosol"/>
    <property type="evidence" value="ECO:0007669"/>
    <property type="project" value="UniProtKB-SubCell"/>
</dbReference>
<dbReference type="GO" id="GO:0004364">
    <property type="term" value="F:glutathione transferase activity"/>
    <property type="evidence" value="ECO:0007669"/>
    <property type="project" value="UniProtKB-EC"/>
</dbReference>
<dbReference type="GO" id="GO:0006979">
    <property type="term" value="P:response to oxidative stress"/>
    <property type="evidence" value="ECO:0000270"/>
    <property type="project" value="TAIR"/>
</dbReference>
<dbReference type="GO" id="GO:0009407">
    <property type="term" value="P:toxin catabolic process"/>
    <property type="evidence" value="ECO:0000304"/>
    <property type="project" value="TAIR"/>
</dbReference>
<dbReference type="CDD" id="cd03187">
    <property type="entry name" value="GST_C_Phi"/>
    <property type="match status" value="1"/>
</dbReference>
<dbReference type="CDD" id="cd03053">
    <property type="entry name" value="GST_N_Phi"/>
    <property type="match status" value="1"/>
</dbReference>
<dbReference type="FunFam" id="1.20.1050.10:FF:000004">
    <property type="entry name" value="Glutathione S-transferase F2"/>
    <property type="match status" value="1"/>
</dbReference>
<dbReference type="FunFam" id="3.40.30.10:FF:000016">
    <property type="entry name" value="Glutathione S-transferase F2"/>
    <property type="match status" value="1"/>
</dbReference>
<dbReference type="Gene3D" id="1.20.1050.10">
    <property type="match status" value="1"/>
</dbReference>
<dbReference type="Gene3D" id="3.40.30.10">
    <property type="entry name" value="Glutaredoxin"/>
    <property type="match status" value="1"/>
</dbReference>
<dbReference type="InterPro" id="IPR010987">
    <property type="entry name" value="Glutathione-S-Trfase_C-like"/>
</dbReference>
<dbReference type="InterPro" id="IPR036282">
    <property type="entry name" value="Glutathione-S-Trfase_C_sf"/>
</dbReference>
<dbReference type="InterPro" id="IPR040079">
    <property type="entry name" value="Glutathione_S-Trfase"/>
</dbReference>
<dbReference type="InterPro" id="IPR004045">
    <property type="entry name" value="Glutathione_S-Trfase_N"/>
</dbReference>
<dbReference type="InterPro" id="IPR004046">
    <property type="entry name" value="GST_C"/>
</dbReference>
<dbReference type="InterPro" id="IPR034347">
    <property type="entry name" value="GST_Phi_C"/>
</dbReference>
<dbReference type="InterPro" id="IPR036249">
    <property type="entry name" value="Thioredoxin-like_sf"/>
</dbReference>
<dbReference type="PANTHER" id="PTHR43900:SF64">
    <property type="entry name" value="GLUTATHIONE S-TRANSFERASE F11"/>
    <property type="match status" value="1"/>
</dbReference>
<dbReference type="PANTHER" id="PTHR43900">
    <property type="entry name" value="GLUTATHIONE S-TRANSFERASE RHO"/>
    <property type="match status" value="1"/>
</dbReference>
<dbReference type="Pfam" id="PF00043">
    <property type="entry name" value="GST_C"/>
    <property type="match status" value="1"/>
</dbReference>
<dbReference type="Pfam" id="PF02798">
    <property type="entry name" value="GST_N"/>
    <property type="match status" value="1"/>
</dbReference>
<dbReference type="SFLD" id="SFLDS00019">
    <property type="entry name" value="Glutathione_Transferase_(cytos"/>
    <property type="match status" value="1"/>
</dbReference>
<dbReference type="SFLD" id="SFLDG00358">
    <property type="entry name" value="Main_(cytGST)"/>
    <property type="match status" value="1"/>
</dbReference>
<dbReference type="SUPFAM" id="SSF47616">
    <property type="entry name" value="GST C-terminal domain-like"/>
    <property type="match status" value="1"/>
</dbReference>
<dbReference type="SUPFAM" id="SSF52833">
    <property type="entry name" value="Thioredoxin-like"/>
    <property type="match status" value="1"/>
</dbReference>
<dbReference type="PROSITE" id="PS50405">
    <property type="entry name" value="GST_CTER"/>
    <property type="match status" value="1"/>
</dbReference>
<dbReference type="PROSITE" id="PS50404">
    <property type="entry name" value="GST_NTER"/>
    <property type="match status" value="1"/>
</dbReference>
<gene>
    <name evidence="3" type="primary">GSTF11</name>
    <name evidence="3" type="synonym">GSTF6</name>
    <name evidence="5" type="ordered locus">At3g03190</name>
    <name evidence="6" type="ORF">T17B22.12</name>
</gene>
<protein>
    <recommendedName>
        <fullName evidence="3">Glutathione S-transferase F11</fullName>
        <shortName evidence="3">AtGSTF11</shortName>
        <ecNumber evidence="1">2.5.1.18</ecNumber>
    </recommendedName>
    <alternativeName>
        <fullName evidence="3">AtGSTF6</fullName>
    </alternativeName>
    <alternativeName>
        <fullName evidence="3">GST class-phi</fullName>
    </alternativeName>
    <alternativeName>
        <fullName evidence="3">GST class-phi member 11</fullName>
    </alternativeName>
</protein>
<comment type="function">
    <text evidence="1">May be involved in the conjugation of reduced glutathione to a wide number of exogenous and endogenous hydrophobic electrophiles and have a detoxification role against certain herbicides.</text>
</comment>
<comment type="catalytic activity">
    <reaction evidence="1">
        <text>RX + glutathione = an S-substituted glutathione + a halide anion + H(+)</text>
        <dbReference type="Rhea" id="RHEA:16437"/>
        <dbReference type="ChEBI" id="CHEBI:15378"/>
        <dbReference type="ChEBI" id="CHEBI:16042"/>
        <dbReference type="ChEBI" id="CHEBI:17792"/>
        <dbReference type="ChEBI" id="CHEBI:57925"/>
        <dbReference type="ChEBI" id="CHEBI:90779"/>
        <dbReference type="EC" id="2.5.1.18"/>
    </reaction>
</comment>
<comment type="subcellular location">
    <subcellularLocation>
        <location evidence="4">Cytoplasm</location>
        <location evidence="4">Cytosol</location>
    </subcellularLocation>
</comment>
<comment type="similarity">
    <text evidence="4">Belongs to the GST superfamily. Phi family.</text>
</comment>
<name>GSTFB_ARATH</name>